<gene>
    <name evidence="1" type="primary">secB2</name>
    <name type="ordered locus">FTW_1987</name>
</gene>
<name>SECB2_FRATW</name>
<reference key="1">
    <citation type="journal article" date="2007" name="PLoS ONE">
        <title>Complete genomic characterization of a pathogenic A.II strain of Francisella tularensis subspecies tularensis.</title>
        <authorList>
            <person name="Beckstrom-Sternberg S.M."/>
            <person name="Auerbach R.K."/>
            <person name="Godbole S."/>
            <person name="Pearson J.V."/>
            <person name="Beckstrom-Sternberg J.S."/>
            <person name="Deng Z."/>
            <person name="Munk C."/>
            <person name="Kubota K."/>
            <person name="Zhou Y."/>
            <person name="Bruce D."/>
            <person name="Noronha J."/>
            <person name="Scheuermann R.H."/>
            <person name="Wang A."/>
            <person name="Wei X."/>
            <person name="Wang J."/>
            <person name="Hao J."/>
            <person name="Wagner D.M."/>
            <person name="Brettin T.S."/>
            <person name="Brown N."/>
            <person name="Gilna P."/>
            <person name="Keim P.S."/>
        </authorList>
    </citation>
    <scope>NUCLEOTIDE SEQUENCE [LARGE SCALE GENOMIC DNA]</scope>
    <source>
        <strain>WY96-3418</strain>
    </source>
</reference>
<accession>A4J0C0</accession>
<evidence type="ECO:0000255" key="1">
    <source>
        <dbReference type="HAMAP-Rule" id="MF_00821"/>
    </source>
</evidence>
<feature type="chain" id="PRO_0000318237" description="Protein-export protein SecB 2">
    <location>
        <begin position="1"/>
        <end position="149"/>
    </location>
</feature>
<protein>
    <recommendedName>
        <fullName evidence="1">Protein-export protein SecB 2</fullName>
    </recommendedName>
</protein>
<sequence>MDQQAQPQFQIQKVYVKDLSFSIPNSDKIWTTNWKPELHTDLKVEATKLPEENTYETVLTLEVKVENDGMVAFEAEVKQAGIFTVANMQEAQIEHAKKAFCPNILYHYAREAISDLVISGGFPQLCLSAVNFDAMYQDSLKESADSKQH</sequence>
<keyword id="KW-0143">Chaperone</keyword>
<keyword id="KW-0963">Cytoplasm</keyword>
<keyword id="KW-0653">Protein transport</keyword>
<keyword id="KW-0811">Translocation</keyword>
<keyword id="KW-0813">Transport</keyword>
<proteinExistence type="inferred from homology"/>
<comment type="function">
    <text evidence="1">One of the proteins required for the normal export of preproteins out of the cell cytoplasm. It is a molecular chaperone that binds to a subset of precursor proteins, maintaining them in a translocation-competent state. It also specifically binds to its receptor SecA.</text>
</comment>
<comment type="subunit">
    <text evidence="1">Homotetramer, a dimer of dimers. One homotetramer interacts with 1 SecA dimer.</text>
</comment>
<comment type="subcellular location">
    <subcellularLocation>
        <location evidence="1">Cytoplasm</location>
    </subcellularLocation>
</comment>
<comment type="similarity">
    <text evidence="1">Belongs to the SecB family.</text>
</comment>
<dbReference type="EMBL" id="CP000608">
    <property type="protein sequence ID" value="ABO47622.1"/>
    <property type="molecule type" value="Genomic_DNA"/>
</dbReference>
<dbReference type="SMR" id="A4J0C0"/>
<dbReference type="KEGG" id="ftw:FTW_1987"/>
<dbReference type="HOGENOM" id="CLU_111574_1_0_6"/>
<dbReference type="GO" id="GO:0005737">
    <property type="term" value="C:cytoplasm"/>
    <property type="evidence" value="ECO:0007669"/>
    <property type="project" value="UniProtKB-SubCell"/>
</dbReference>
<dbReference type="GO" id="GO:0051082">
    <property type="term" value="F:unfolded protein binding"/>
    <property type="evidence" value="ECO:0007669"/>
    <property type="project" value="InterPro"/>
</dbReference>
<dbReference type="GO" id="GO:0006457">
    <property type="term" value="P:protein folding"/>
    <property type="evidence" value="ECO:0007669"/>
    <property type="project" value="UniProtKB-UniRule"/>
</dbReference>
<dbReference type="GO" id="GO:0051262">
    <property type="term" value="P:protein tetramerization"/>
    <property type="evidence" value="ECO:0007669"/>
    <property type="project" value="InterPro"/>
</dbReference>
<dbReference type="GO" id="GO:0015031">
    <property type="term" value="P:protein transport"/>
    <property type="evidence" value="ECO:0007669"/>
    <property type="project" value="UniProtKB-UniRule"/>
</dbReference>
<dbReference type="Gene3D" id="3.10.420.10">
    <property type="entry name" value="SecB-like"/>
    <property type="match status" value="1"/>
</dbReference>
<dbReference type="HAMAP" id="MF_00821">
    <property type="entry name" value="SecB"/>
    <property type="match status" value="1"/>
</dbReference>
<dbReference type="InterPro" id="IPR003708">
    <property type="entry name" value="SecB"/>
</dbReference>
<dbReference type="InterPro" id="IPR035958">
    <property type="entry name" value="SecB-like_sf"/>
</dbReference>
<dbReference type="NCBIfam" id="NF004393">
    <property type="entry name" value="PRK05751.1-4"/>
    <property type="match status" value="1"/>
</dbReference>
<dbReference type="NCBIfam" id="NF009590">
    <property type="entry name" value="PRK13031.1"/>
    <property type="match status" value="1"/>
</dbReference>
<dbReference type="NCBIfam" id="TIGR00809">
    <property type="entry name" value="secB"/>
    <property type="match status" value="1"/>
</dbReference>
<dbReference type="PANTHER" id="PTHR36918">
    <property type="match status" value="1"/>
</dbReference>
<dbReference type="PANTHER" id="PTHR36918:SF1">
    <property type="entry name" value="PROTEIN-EXPORT PROTEIN SECB"/>
    <property type="match status" value="1"/>
</dbReference>
<dbReference type="Pfam" id="PF02556">
    <property type="entry name" value="SecB"/>
    <property type="match status" value="1"/>
</dbReference>
<dbReference type="PRINTS" id="PR01594">
    <property type="entry name" value="SECBCHAPRONE"/>
</dbReference>
<dbReference type="SUPFAM" id="SSF54611">
    <property type="entry name" value="SecB-like"/>
    <property type="match status" value="1"/>
</dbReference>
<organism>
    <name type="scientific">Francisella tularensis subsp. tularensis (strain WY96-3418)</name>
    <dbReference type="NCBI Taxonomy" id="418136"/>
    <lineage>
        <taxon>Bacteria</taxon>
        <taxon>Pseudomonadati</taxon>
        <taxon>Pseudomonadota</taxon>
        <taxon>Gammaproteobacteria</taxon>
        <taxon>Thiotrichales</taxon>
        <taxon>Francisellaceae</taxon>
        <taxon>Francisella</taxon>
    </lineage>
</organism>